<reference key="1">
    <citation type="journal article" date="2005" name="Nucleic Acids Res.">
        <title>Genome dynamics and diversity of Shigella species, the etiologic agents of bacillary dysentery.</title>
        <authorList>
            <person name="Yang F."/>
            <person name="Yang J."/>
            <person name="Zhang X."/>
            <person name="Chen L."/>
            <person name="Jiang Y."/>
            <person name="Yan Y."/>
            <person name="Tang X."/>
            <person name="Wang J."/>
            <person name="Xiong Z."/>
            <person name="Dong J."/>
            <person name="Xue Y."/>
            <person name="Zhu Y."/>
            <person name="Xu X."/>
            <person name="Sun L."/>
            <person name="Chen S."/>
            <person name="Nie H."/>
            <person name="Peng J."/>
            <person name="Xu J."/>
            <person name="Wang Y."/>
            <person name="Yuan Z."/>
            <person name="Wen Y."/>
            <person name="Yao Z."/>
            <person name="Shen Y."/>
            <person name="Qiang B."/>
            <person name="Hou Y."/>
            <person name="Yu J."/>
            <person name="Jin Q."/>
        </authorList>
    </citation>
    <scope>NUCLEOTIDE SEQUENCE [LARGE SCALE GENOMIC DNA]</scope>
    <source>
        <strain>Ss046</strain>
    </source>
</reference>
<keyword id="KW-0067">ATP-binding</keyword>
<keyword id="KW-0997">Cell inner membrane</keyword>
<keyword id="KW-1003">Cell membrane</keyword>
<keyword id="KW-0472">Membrane</keyword>
<keyword id="KW-0547">Nucleotide-binding</keyword>
<keyword id="KW-1185">Reference proteome</keyword>
<keyword id="KW-1278">Translocase</keyword>
<keyword id="KW-0813">Transport</keyword>
<protein>
    <recommendedName>
        <fullName evidence="1">Taurine import ATP-binding protein TauB</fullName>
        <ecNumber evidence="1">7.6.2.7</ecNumber>
    </recommendedName>
</protein>
<dbReference type="EC" id="7.6.2.7" evidence="1"/>
<dbReference type="EMBL" id="CP000038">
    <property type="protein sequence ID" value="AAZ87120.1"/>
    <property type="molecule type" value="Genomic_DNA"/>
</dbReference>
<dbReference type="RefSeq" id="WP_000939375.1">
    <property type="nucleotide sequence ID" value="NC_007384.1"/>
</dbReference>
<dbReference type="SMR" id="Q3Z542"/>
<dbReference type="GeneID" id="93777092"/>
<dbReference type="KEGG" id="ssn:SSON_0344"/>
<dbReference type="HOGENOM" id="CLU_000604_1_22_6"/>
<dbReference type="Proteomes" id="UP000002529">
    <property type="component" value="Chromosome"/>
</dbReference>
<dbReference type="GO" id="GO:0005886">
    <property type="term" value="C:plasma membrane"/>
    <property type="evidence" value="ECO:0007669"/>
    <property type="project" value="UniProtKB-SubCell"/>
</dbReference>
<dbReference type="GO" id="GO:0015411">
    <property type="term" value="F:ABC-type taurine transporter transporter activity"/>
    <property type="evidence" value="ECO:0007669"/>
    <property type="project" value="UniProtKB-EC"/>
</dbReference>
<dbReference type="GO" id="GO:0005524">
    <property type="term" value="F:ATP binding"/>
    <property type="evidence" value="ECO:0007669"/>
    <property type="project" value="UniProtKB-KW"/>
</dbReference>
<dbReference type="GO" id="GO:0016887">
    <property type="term" value="F:ATP hydrolysis activity"/>
    <property type="evidence" value="ECO:0007669"/>
    <property type="project" value="InterPro"/>
</dbReference>
<dbReference type="CDD" id="cd03293">
    <property type="entry name" value="ABC_NrtD_SsuB_transporters"/>
    <property type="match status" value="1"/>
</dbReference>
<dbReference type="FunFam" id="3.40.50.300:FF:000653">
    <property type="entry name" value="Aliphatic sulfonates import ATP-binding protein SsuB"/>
    <property type="match status" value="1"/>
</dbReference>
<dbReference type="Gene3D" id="3.40.50.300">
    <property type="entry name" value="P-loop containing nucleotide triphosphate hydrolases"/>
    <property type="match status" value="1"/>
</dbReference>
<dbReference type="InterPro" id="IPR003593">
    <property type="entry name" value="AAA+_ATPase"/>
</dbReference>
<dbReference type="InterPro" id="IPR003439">
    <property type="entry name" value="ABC_transporter-like_ATP-bd"/>
</dbReference>
<dbReference type="InterPro" id="IPR017871">
    <property type="entry name" value="ABC_transporter-like_CS"/>
</dbReference>
<dbReference type="InterPro" id="IPR050166">
    <property type="entry name" value="ABC_transporter_ATP-bind"/>
</dbReference>
<dbReference type="InterPro" id="IPR027417">
    <property type="entry name" value="P-loop_NTPase"/>
</dbReference>
<dbReference type="NCBIfam" id="NF008421">
    <property type="entry name" value="PRK11248.1"/>
    <property type="match status" value="1"/>
</dbReference>
<dbReference type="PANTHER" id="PTHR42788:SF18">
    <property type="entry name" value="TAURINE IMPORT ATP-BINDING PROTEIN TAUB"/>
    <property type="match status" value="1"/>
</dbReference>
<dbReference type="PANTHER" id="PTHR42788">
    <property type="entry name" value="TAURINE IMPORT ATP-BINDING PROTEIN-RELATED"/>
    <property type="match status" value="1"/>
</dbReference>
<dbReference type="Pfam" id="PF00005">
    <property type="entry name" value="ABC_tran"/>
    <property type="match status" value="1"/>
</dbReference>
<dbReference type="SMART" id="SM00382">
    <property type="entry name" value="AAA"/>
    <property type="match status" value="1"/>
</dbReference>
<dbReference type="SUPFAM" id="SSF52540">
    <property type="entry name" value="P-loop containing nucleoside triphosphate hydrolases"/>
    <property type="match status" value="1"/>
</dbReference>
<dbReference type="PROSITE" id="PS00211">
    <property type="entry name" value="ABC_TRANSPORTER_1"/>
    <property type="match status" value="1"/>
</dbReference>
<dbReference type="PROSITE" id="PS50893">
    <property type="entry name" value="ABC_TRANSPORTER_2"/>
    <property type="match status" value="1"/>
</dbReference>
<dbReference type="PROSITE" id="PS51250">
    <property type="entry name" value="TAUB"/>
    <property type="match status" value="1"/>
</dbReference>
<feature type="chain" id="PRO_0000275846" description="Taurine import ATP-binding protein TauB">
    <location>
        <begin position="1"/>
        <end position="255"/>
    </location>
</feature>
<feature type="domain" description="ABC transporter" evidence="1">
    <location>
        <begin position="2"/>
        <end position="229"/>
    </location>
</feature>
<feature type="binding site" evidence="1">
    <location>
        <begin position="34"/>
        <end position="41"/>
    </location>
    <ligand>
        <name>ATP</name>
        <dbReference type="ChEBI" id="CHEBI:30616"/>
    </ligand>
</feature>
<gene>
    <name evidence="1" type="primary">tauB</name>
    <name type="ordered locus">SSON_0344</name>
</gene>
<evidence type="ECO:0000255" key="1">
    <source>
        <dbReference type="HAMAP-Rule" id="MF_01714"/>
    </source>
</evidence>
<accession>Q3Z542</accession>
<proteinExistence type="inferred from homology"/>
<name>TAUB_SHISS</name>
<comment type="function">
    <text evidence="1">Part of the ABC transporter complex TauABC involved in taurine import. Responsible for energy coupling to the transport system.</text>
</comment>
<comment type="catalytic activity">
    <reaction evidence="1">
        <text>taurine(out) + ATP + H2O = taurine(in) + ADP + phosphate + H(+)</text>
        <dbReference type="Rhea" id="RHEA:14613"/>
        <dbReference type="ChEBI" id="CHEBI:15377"/>
        <dbReference type="ChEBI" id="CHEBI:15378"/>
        <dbReference type="ChEBI" id="CHEBI:30616"/>
        <dbReference type="ChEBI" id="CHEBI:43474"/>
        <dbReference type="ChEBI" id="CHEBI:456216"/>
        <dbReference type="ChEBI" id="CHEBI:507393"/>
        <dbReference type="EC" id="7.6.2.7"/>
    </reaction>
</comment>
<comment type="subunit">
    <text evidence="1">The complex is composed of two ATP-binding proteins (TauB), two transmembrane proteins (TauC) and a solute-binding protein (TauA).</text>
</comment>
<comment type="subcellular location">
    <subcellularLocation>
        <location evidence="1">Cell inner membrane</location>
        <topology evidence="1">Peripheral membrane protein</topology>
    </subcellularLocation>
</comment>
<comment type="similarity">
    <text evidence="1">Belongs to the ABC transporter superfamily. Taurine importer (TC 3.A.1.17.1) family.</text>
</comment>
<sequence length="255" mass="28297">MLQISHLYADYGGKPALEDINLTLESGELLVVLGPSGCGKTTLLNLIAGFVPYQHGSIQLAGKRIEGPGAERGVVFQNEGLLPWRNVQDNVAFGLQLAGIEKMQRLEIAHQMLKKVGLEGAEKRYIWQLSGGQRQRVGIARALAANPQLLLLDEPFGALDAFTRDQMQTLLLKLWQETGKQVLLITHDIEEAVFMATELVLLSSGPGRVLERLPLNFARRFVAGESSRSIKSDPQFIAMREYVLSRVFEQREAFS</sequence>
<organism>
    <name type="scientific">Shigella sonnei (strain Ss046)</name>
    <dbReference type="NCBI Taxonomy" id="300269"/>
    <lineage>
        <taxon>Bacteria</taxon>
        <taxon>Pseudomonadati</taxon>
        <taxon>Pseudomonadota</taxon>
        <taxon>Gammaproteobacteria</taxon>
        <taxon>Enterobacterales</taxon>
        <taxon>Enterobacteriaceae</taxon>
        <taxon>Shigella</taxon>
    </lineage>
</organism>